<dbReference type="EMBL" id="CP001110">
    <property type="protein sequence ID" value="ACF44834.1"/>
    <property type="molecule type" value="Genomic_DNA"/>
</dbReference>
<dbReference type="RefSeq" id="WP_012509306.1">
    <property type="nucleotide sequence ID" value="NC_011060.1"/>
</dbReference>
<dbReference type="SMR" id="B4SG07"/>
<dbReference type="STRING" id="324925.Ppha_2675"/>
<dbReference type="KEGG" id="pph:Ppha_2675"/>
<dbReference type="eggNOG" id="COG0231">
    <property type="taxonomic scope" value="Bacteria"/>
</dbReference>
<dbReference type="HOGENOM" id="CLU_074944_0_1_10"/>
<dbReference type="OrthoDB" id="9801844at2"/>
<dbReference type="UniPathway" id="UPA00345"/>
<dbReference type="Proteomes" id="UP000002724">
    <property type="component" value="Chromosome"/>
</dbReference>
<dbReference type="GO" id="GO:0005737">
    <property type="term" value="C:cytoplasm"/>
    <property type="evidence" value="ECO:0007669"/>
    <property type="project" value="UniProtKB-SubCell"/>
</dbReference>
<dbReference type="GO" id="GO:0003746">
    <property type="term" value="F:translation elongation factor activity"/>
    <property type="evidence" value="ECO:0007669"/>
    <property type="project" value="UniProtKB-UniRule"/>
</dbReference>
<dbReference type="GO" id="GO:0043043">
    <property type="term" value="P:peptide biosynthetic process"/>
    <property type="evidence" value="ECO:0007669"/>
    <property type="project" value="InterPro"/>
</dbReference>
<dbReference type="CDD" id="cd04470">
    <property type="entry name" value="S1_EF-P_repeat_1"/>
    <property type="match status" value="1"/>
</dbReference>
<dbReference type="CDD" id="cd05794">
    <property type="entry name" value="S1_EF-P_repeat_2"/>
    <property type="match status" value="1"/>
</dbReference>
<dbReference type="FunFam" id="2.40.50.140:FF:000004">
    <property type="entry name" value="Elongation factor P"/>
    <property type="match status" value="1"/>
</dbReference>
<dbReference type="FunFam" id="2.40.50.140:FF:000009">
    <property type="entry name" value="Elongation factor P"/>
    <property type="match status" value="1"/>
</dbReference>
<dbReference type="Gene3D" id="2.30.30.30">
    <property type="match status" value="1"/>
</dbReference>
<dbReference type="Gene3D" id="2.40.50.140">
    <property type="entry name" value="Nucleic acid-binding proteins"/>
    <property type="match status" value="2"/>
</dbReference>
<dbReference type="HAMAP" id="MF_00141">
    <property type="entry name" value="EF_P"/>
    <property type="match status" value="1"/>
</dbReference>
<dbReference type="InterPro" id="IPR015365">
    <property type="entry name" value="Elong-fact-P_C"/>
</dbReference>
<dbReference type="InterPro" id="IPR012340">
    <property type="entry name" value="NA-bd_OB-fold"/>
</dbReference>
<dbReference type="InterPro" id="IPR014722">
    <property type="entry name" value="Rib_uL2_dom2"/>
</dbReference>
<dbReference type="InterPro" id="IPR020599">
    <property type="entry name" value="Transl_elong_fac_P/YeiP"/>
</dbReference>
<dbReference type="InterPro" id="IPR013185">
    <property type="entry name" value="Transl_elong_KOW-like"/>
</dbReference>
<dbReference type="InterPro" id="IPR001059">
    <property type="entry name" value="Transl_elong_P/YeiP_cen"/>
</dbReference>
<dbReference type="InterPro" id="IPR013852">
    <property type="entry name" value="Transl_elong_P/YeiP_CS"/>
</dbReference>
<dbReference type="InterPro" id="IPR011768">
    <property type="entry name" value="Transl_elongation_fac_P"/>
</dbReference>
<dbReference type="InterPro" id="IPR008991">
    <property type="entry name" value="Translation_prot_SH3-like_sf"/>
</dbReference>
<dbReference type="NCBIfam" id="TIGR00038">
    <property type="entry name" value="efp"/>
    <property type="match status" value="1"/>
</dbReference>
<dbReference type="NCBIfam" id="NF001810">
    <property type="entry name" value="PRK00529.1"/>
    <property type="match status" value="1"/>
</dbReference>
<dbReference type="PANTHER" id="PTHR30053">
    <property type="entry name" value="ELONGATION FACTOR P"/>
    <property type="match status" value="1"/>
</dbReference>
<dbReference type="PANTHER" id="PTHR30053:SF12">
    <property type="entry name" value="ELONGATION FACTOR P (EF-P) FAMILY PROTEIN"/>
    <property type="match status" value="1"/>
</dbReference>
<dbReference type="Pfam" id="PF01132">
    <property type="entry name" value="EFP"/>
    <property type="match status" value="1"/>
</dbReference>
<dbReference type="Pfam" id="PF08207">
    <property type="entry name" value="EFP_N"/>
    <property type="match status" value="1"/>
</dbReference>
<dbReference type="Pfam" id="PF09285">
    <property type="entry name" value="Elong-fact-P_C"/>
    <property type="match status" value="1"/>
</dbReference>
<dbReference type="PIRSF" id="PIRSF005901">
    <property type="entry name" value="EF-P"/>
    <property type="match status" value="1"/>
</dbReference>
<dbReference type="SMART" id="SM01185">
    <property type="entry name" value="EFP"/>
    <property type="match status" value="1"/>
</dbReference>
<dbReference type="SMART" id="SM00841">
    <property type="entry name" value="Elong-fact-P_C"/>
    <property type="match status" value="1"/>
</dbReference>
<dbReference type="SUPFAM" id="SSF50249">
    <property type="entry name" value="Nucleic acid-binding proteins"/>
    <property type="match status" value="2"/>
</dbReference>
<dbReference type="SUPFAM" id="SSF50104">
    <property type="entry name" value="Translation proteins SH3-like domain"/>
    <property type="match status" value="1"/>
</dbReference>
<dbReference type="PROSITE" id="PS01275">
    <property type="entry name" value="EFP"/>
    <property type="match status" value="1"/>
</dbReference>
<accession>B4SG07</accession>
<keyword id="KW-0963">Cytoplasm</keyword>
<keyword id="KW-0251">Elongation factor</keyword>
<keyword id="KW-0648">Protein biosynthesis</keyword>
<keyword id="KW-1185">Reference proteome</keyword>
<sequence length="188" mass="20961">MISISNVSKGAIIRFKGEPHSIESLMHRTPGNLRAFYQANMRNLKSGRNVEYRFSATESVDVIITERKQYQYLYRDGSDFVMMDSETFDQINVPEIAIGSASRFVKDGITVTIVFSDDASILGVELPTFVEVEVTETSPASKDDRATSGTKPAMVETGTEVSVPMFIQTGSIIRVDTRTGEYIERVKK</sequence>
<feature type="chain" id="PRO_1000096185" description="Elongation factor P">
    <location>
        <begin position="1"/>
        <end position="188"/>
    </location>
</feature>
<gene>
    <name evidence="1" type="primary">efp</name>
    <name type="ordered locus">Ppha_2675</name>
</gene>
<comment type="function">
    <text evidence="1">Involved in peptide bond synthesis. Stimulates efficient translation and peptide-bond synthesis on native or reconstituted 70S ribosomes in vitro. Probably functions indirectly by altering the affinity of the ribosome for aminoacyl-tRNA, thus increasing their reactivity as acceptors for peptidyl transferase.</text>
</comment>
<comment type="pathway">
    <text evidence="1">Protein biosynthesis; polypeptide chain elongation.</text>
</comment>
<comment type="subcellular location">
    <subcellularLocation>
        <location evidence="1">Cytoplasm</location>
    </subcellularLocation>
</comment>
<comment type="similarity">
    <text evidence="1">Belongs to the elongation factor P family.</text>
</comment>
<proteinExistence type="inferred from homology"/>
<evidence type="ECO:0000255" key="1">
    <source>
        <dbReference type="HAMAP-Rule" id="MF_00141"/>
    </source>
</evidence>
<reference key="1">
    <citation type="submission" date="2008-06" db="EMBL/GenBank/DDBJ databases">
        <title>Complete sequence of Pelodictyon phaeoclathratiforme BU-1.</title>
        <authorList>
            <consortium name="US DOE Joint Genome Institute"/>
            <person name="Lucas S."/>
            <person name="Copeland A."/>
            <person name="Lapidus A."/>
            <person name="Glavina del Rio T."/>
            <person name="Dalin E."/>
            <person name="Tice H."/>
            <person name="Bruce D."/>
            <person name="Goodwin L."/>
            <person name="Pitluck S."/>
            <person name="Schmutz J."/>
            <person name="Larimer F."/>
            <person name="Land M."/>
            <person name="Hauser L."/>
            <person name="Kyrpides N."/>
            <person name="Mikhailova N."/>
            <person name="Liu Z."/>
            <person name="Li T."/>
            <person name="Zhao F."/>
            <person name="Overmann J."/>
            <person name="Bryant D.A."/>
            <person name="Richardson P."/>
        </authorList>
    </citation>
    <scope>NUCLEOTIDE SEQUENCE [LARGE SCALE GENOMIC DNA]</scope>
    <source>
        <strain>DSM 5477 / BU-1</strain>
    </source>
</reference>
<organism>
    <name type="scientific">Pelodictyon phaeoclathratiforme (strain DSM 5477 / BU-1)</name>
    <dbReference type="NCBI Taxonomy" id="324925"/>
    <lineage>
        <taxon>Bacteria</taxon>
        <taxon>Pseudomonadati</taxon>
        <taxon>Chlorobiota</taxon>
        <taxon>Chlorobiia</taxon>
        <taxon>Chlorobiales</taxon>
        <taxon>Chlorobiaceae</taxon>
        <taxon>Chlorobium/Pelodictyon group</taxon>
        <taxon>Pelodictyon</taxon>
    </lineage>
</organism>
<protein>
    <recommendedName>
        <fullName evidence="1">Elongation factor P</fullName>
        <shortName evidence="1">EF-P</shortName>
    </recommendedName>
</protein>
<name>EFP_PELPB</name>